<evidence type="ECO:0000250" key="1"/>
<evidence type="ECO:0000305" key="2"/>
<organism>
    <name type="scientific">Rickettsia felis (strain ATCC VR-1525 / URRWXCal2)</name>
    <name type="common">Rickettsia azadi</name>
    <dbReference type="NCBI Taxonomy" id="315456"/>
    <lineage>
        <taxon>Bacteria</taxon>
        <taxon>Pseudomonadati</taxon>
        <taxon>Pseudomonadota</taxon>
        <taxon>Alphaproteobacteria</taxon>
        <taxon>Rickettsiales</taxon>
        <taxon>Rickettsiaceae</taxon>
        <taxon>Rickettsieae</taxon>
        <taxon>Rickettsia</taxon>
        <taxon>spotted fever group</taxon>
    </lineage>
</organism>
<protein>
    <recommendedName>
        <fullName>Uncharacterized hydrolase RF_1189</fullName>
        <ecNumber>3.1.-.-</ecNumber>
    </recommendedName>
</protein>
<name>Y1189_RICFE</name>
<sequence>MNKYLEYPEVESNRQPAKKLVVLLHGVGSDGHDLIGLVPYIKNDLPDCHFISPHGIEAYDMMPYGRQWFSLQDRSPHIIAKLIANNISKLEDIIKQKQEELNLTNKDTIIIGFSQGTMIGLYLTLIQREPFFCTIGFSGALIPPMEVNNKLTPICLIHGELDEVVGVSEMYNASNYLSKLHIEHSGHKLTSLAHSIDGRGLEIAINFINTCHTVV</sequence>
<proteinExistence type="inferred from homology"/>
<comment type="similarity">
    <text evidence="2">Belongs to the AB hydrolase superfamily. AB hydrolase 2 family.</text>
</comment>
<dbReference type="EC" id="3.1.-.-"/>
<dbReference type="EMBL" id="CP000053">
    <property type="protein sequence ID" value="AAY62040.1"/>
    <property type="molecule type" value="Genomic_DNA"/>
</dbReference>
<dbReference type="SMR" id="Q4UK95"/>
<dbReference type="STRING" id="315456.RF_1189"/>
<dbReference type="ESTHER" id="ricfe-q4uk95">
    <property type="family name" value="LYsophospholipase_carboxylesterase"/>
</dbReference>
<dbReference type="KEGG" id="rfe:RF_1189"/>
<dbReference type="eggNOG" id="COG0400">
    <property type="taxonomic scope" value="Bacteria"/>
</dbReference>
<dbReference type="HOGENOM" id="CLU_049413_5_2_5"/>
<dbReference type="OrthoDB" id="9801763at2"/>
<dbReference type="Proteomes" id="UP000008548">
    <property type="component" value="Chromosome"/>
</dbReference>
<dbReference type="GO" id="GO:0016787">
    <property type="term" value="F:hydrolase activity"/>
    <property type="evidence" value="ECO:0007669"/>
    <property type="project" value="UniProtKB-KW"/>
</dbReference>
<dbReference type="Gene3D" id="3.40.50.1820">
    <property type="entry name" value="alpha/beta hydrolase"/>
    <property type="match status" value="1"/>
</dbReference>
<dbReference type="InterPro" id="IPR029058">
    <property type="entry name" value="AB_hydrolase_fold"/>
</dbReference>
<dbReference type="InterPro" id="IPR050565">
    <property type="entry name" value="LYPA1-2/EST-like"/>
</dbReference>
<dbReference type="InterPro" id="IPR003140">
    <property type="entry name" value="PLipase/COase/thioEstase"/>
</dbReference>
<dbReference type="PANTHER" id="PTHR10655:SF17">
    <property type="entry name" value="LYSOPHOSPHOLIPASE-LIKE PROTEIN 1"/>
    <property type="match status" value="1"/>
</dbReference>
<dbReference type="PANTHER" id="PTHR10655">
    <property type="entry name" value="LYSOPHOSPHOLIPASE-RELATED"/>
    <property type="match status" value="1"/>
</dbReference>
<dbReference type="Pfam" id="PF02230">
    <property type="entry name" value="Abhydrolase_2"/>
    <property type="match status" value="1"/>
</dbReference>
<dbReference type="SUPFAM" id="SSF53474">
    <property type="entry name" value="alpha/beta-Hydrolases"/>
    <property type="match status" value="1"/>
</dbReference>
<keyword id="KW-0378">Hydrolase</keyword>
<feature type="chain" id="PRO_0000272339" description="Uncharacterized hydrolase RF_1189">
    <location>
        <begin position="1"/>
        <end position="215"/>
    </location>
</feature>
<feature type="active site" description="Charge relay system" evidence="1">
    <location>
        <position position="114"/>
    </location>
</feature>
<feature type="active site" description="Charge relay system" evidence="1">
    <location>
        <position position="162"/>
    </location>
</feature>
<feature type="active site" description="Charge relay system" evidence="1">
    <location>
        <position position="194"/>
    </location>
</feature>
<accession>Q4UK95</accession>
<reference key="1">
    <citation type="journal article" date="2005" name="PLoS Biol.">
        <title>The genome sequence of Rickettsia felis identifies the first putative conjugative plasmid in an obligate intracellular parasite.</title>
        <authorList>
            <person name="Ogata H."/>
            <person name="Renesto P."/>
            <person name="Audic S."/>
            <person name="Robert C."/>
            <person name="Blanc G."/>
            <person name="Fournier P.-E."/>
            <person name="Parinello H."/>
            <person name="Claverie J.-M."/>
            <person name="Raoult D."/>
        </authorList>
    </citation>
    <scope>NUCLEOTIDE SEQUENCE [LARGE SCALE GENOMIC DNA]</scope>
    <source>
        <strain>ATCC VR-1525 / URRWXCal2</strain>
    </source>
</reference>
<gene>
    <name type="ordered locus">RF_1189</name>
</gene>